<keyword id="KW-0068">Autocatalytic cleavage</keyword>
<keyword id="KW-1003">Cell membrane</keyword>
<keyword id="KW-1015">Disulfide bond</keyword>
<keyword id="KW-0325">Glycoprotein</keyword>
<keyword id="KW-0336">GPI-anchor</keyword>
<keyword id="KW-0449">Lipoprotein</keyword>
<keyword id="KW-0472">Membrane</keyword>
<keyword id="KW-1185">Reference proteome</keyword>
<keyword id="KW-0732">Signal</keyword>
<feature type="signal peptide" evidence="2">
    <location>
        <begin position="1"/>
        <end position="53"/>
    </location>
</feature>
<feature type="propeptide" id="PRO_0000285777" description="Removed in mature form" evidence="1">
    <location>
        <begin position="54"/>
        <end position="176"/>
    </location>
</feature>
<feature type="chain" id="PRO_0000285778" description="Repulsive guidance molecule A">
    <location>
        <begin position="177"/>
        <end position="433"/>
    </location>
</feature>
<feature type="propeptide" id="PRO_0000285779" description="Removed in mature form" evidence="2">
    <location>
        <begin position="434"/>
        <end position="458"/>
    </location>
</feature>
<feature type="region of interest" description="Disordered" evidence="3">
    <location>
        <begin position="121"/>
        <end position="149"/>
    </location>
</feature>
<feature type="compositionally biased region" description="Polar residues" evidence="3">
    <location>
        <begin position="121"/>
        <end position="133"/>
    </location>
</feature>
<feature type="site" description="Cleavage; by autolysis" evidence="1">
    <location>
        <begin position="176"/>
        <end position="177"/>
    </location>
</feature>
<feature type="lipid moiety-binding region" description="GPI-anchor amidated alanine" evidence="2">
    <location>
        <position position="433"/>
    </location>
</feature>
<feature type="glycosylation site" description="N-linked (GlcNAc...) asparagine" evidence="2">
    <location>
        <position position="122"/>
    </location>
</feature>
<feature type="glycosylation site" description="N-linked (GlcNAc...) asparagine" evidence="2">
    <location>
        <position position="167"/>
    </location>
</feature>
<feature type="glycosylation site" description="N-linked (GlcNAc...) asparagine" evidence="2">
    <location>
        <position position="397"/>
    </location>
</feature>
<feature type="disulfide bond" evidence="1">
    <location>
        <begin position="153"/>
        <end position="234"/>
    </location>
</feature>
<feature type="disulfide bond" evidence="1">
    <location>
        <begin position="171"/>
        <end position="323"/>
    </location>
</feature>
<protein>
    <recommendedName>
        <fullName>Repulsive guidance molecule A</fullName>
    </recommendedName>
    <alternativeName>
        <fullName>RGM domain family member A</fullName>
    </alternativeName>
</protein>
<gene>
    <name type="primary">RGMA</name>
    <name type="ORF">QccE-16553</name>
</gene>
<evidence type="ECO:0000250" key="1"/>
<evidence type="ECO:0000255" key="2"/>
<evidence type="ECO:0000256" key="3">
    <source>
        <dbReference type="SAM" id="MobiDB-lite"/>
    </source>
</evidence>
<evidence type="ECO:0000305" key="4"/>
<proteinExistence type="evidence at transcript level"/>
<accession>Q9N0A6</accession>
<reference key="1">
    <citation type="submission" date="2000-07" db="EMBL/GenBank/DDBJ databases">
        <title>Isolation of full-length cDNA clones from macaque brain cDNA libraries.</title>
        <authorList>
            <person name="Osada N."/>
            <person name="Hida M."/>
            <person name="Kusuda J."/>
            <person name="Tanuma R."/>
            <person name="Iseki K."/>
            <person name="Hirai M."/>
            <person name="Terao K."/>
            <person name="Suzuki Y."/>
            <person name="Sugano S."/>
            <person name="Hashimoto K."/>
        </authorList>
    </citation>
    <scope>NUCLEOTIDE SEQUENCE [LARGE SCALE MRNA]</scope>
    <source>
        <tissue>Brain cortex</tissue>
    </source>
</reference>
<comment type="function">
    <text evidence="1">Member of the repulsive guidance molecule (RGM) family that performs several functions in the developing and adult nervous system. Regulates cephalic neural tube closure, inhibits neurite outgrowth and cortical neuron branching, and the formation of mature synapses. Binding to its receptor NEO1/neogenin induces activation of RHOA-ROCK1/Rho-kinase signaling pathway through UNC5B-ARHGEF12/LARG-PTK2/FAK1 cascade, leading to collapse of the neuronal growth cone and neurite outgrowth inhibition. Furthermore, RGMA binding to NEO1/neogenin leads to HRAS inactivation by influencing HRAS-PTK2/FAK1-AKT1 pathway. It also functions as a bone morphogenetic protein (BMP) coreceptor that may signal through SMAD1, SMAD5, and SMAD8 (By similarity).</text>
</comment>
<comment type="subunit">
    <text evidence="1">Interacts with NEO1, BMP2 and BMP4.</text>
</comment>
<comment type="subcellular location">
    <subcellularLocation>
        <location evidence="1">Cell membrane</location>
        <topology evidence="1">Lipid-anchor</topology>
        <topology evidence="1">GPI-anchor</topology>
    </subcellularLocation>
</comment>
<comment type="PTM">
    <text evidence="1">Autocatalytically cleaved at low pH; the two chains remain linked via two disulfide bonds.</text>
</comment>
<comment type="similarity">
    <text evidence="4">Belongs to the repulsive guidance molecule (RGM) family.</text>
</comment>
<organism>
    <name type="scientific">Macaca fascicularis</name>
    <name type="common">Crab-eating macaque</name>
    <name type="synonym">Cynomolgus monkey</name>
    <dbReference type="NCBI Taxonomy" id="9541"/>
    <lineage>
        <taxon>Eukaryota</taxon>
        <taxon>Metazoa</taxon>
        <taxon>Chordata</taxon>
        <taxon>Craniata</taxon>
        <taxon>Vertebrata</taxon>
        <taxon>Euteleostomi</taxon>
        <taxon>Mammalia</taxon>
        <taxon>Eutheria</taxon>
        <taxon>Euarchontoglires</taxon>
        <taxon>Primates</taxon>
        <taxon>Haplorrhini</taxon>
        <taxon>Catarrhini</taxon>
        <taxon>Cercopithecidae</taxon>
        <taxon>Cercopithecinae</taxon>
        <taxon>Macaca</taxon>
    </lineage>
</organism>
<name>RGMA_MACFA</name>
<sequence>MGGPGPRRAGTSRERLVVTGRAGWMGMGRGAGRSALGFWPTLAFLLCSFPAATSPCKILKCNSEFWSATSGSHAPASDDTPEFCAALRSYALCTRRTARTCRGDLAYHSAVHGIEDLMSQHNCSKDGPTSQPRLHTLPPAGDSQERSDSPEICHCEKSFHKHSATPNYTHCGLFGDPHLRTFTDRFQTCKVQGAWPLIDNNYLNVQVTNTPVLPGSAATATSKLTIIFKNFQECVDQKVYQAEMDELPAAFVDGSKNGGDKHGANSLKITEKVSGQHVEIRAKYIGTTIVVRQVGRYLTFAVRVPEEVVNAVEDWDSQGLYLCLRGCPLNQQIDFQAFHTNTEGTGARRLAAASPAPTAPETFPYETAVAKCKEKLPVEDLYYQACVFDLLTTGDVNFTLAAYYALEDVKMLHSNKDKLHLYERTRDLPGRAAAGLPLAPQPLLGALILLLALFPVFC</sequence>
<dbReference type="EMBL" id="AB046024">
    <property type="protein sequence ID" value="BAB01606.1"/>
    <property type="molecule type" value="mRNA"/>
</dbReference>
<dbReference type="RefSeq" id="NP_001270237.1">
    <property type="nucleotide sequence ID" value="NM_001283308.1"/>
</dbReference>
<dbReference type="SMR" id="Q9N0A6"/>
<dbReference type="STRING" id="9541.ENSMFAP00000017223"/>
<dbReference type="GlyCosmos" id="Q9N0A6">
    <property type="glycosylation" value="3 sites, No reported glycans"/>
</dbReference>
<dbReference type="eggNOG" id="ENOG502QSTJ">
    <property type="taxonomic scope" value="Eukaryota"/>
</dbReference>
<dbReference type="Proteomes" id="UP000233100">
    <property type="component" value="Unplaced"/>
</dbReference>
<dbReference type="GO" id="GO:0005886">
    <property type="term" value="C:plasma membrane"/>
    <property type="evidence" value="ECO:0007669"/>
    <property type="project" value="UniProtKB-SubCell"/>
</dbReference>
<dbReference type="GO" id="GO:0098552">
    <property type="term" value="C:side of membrane"/>
    <property type="evidence" value="ECO:0007669"/>
    <property type="project" value="UniProtKB-KW"/>
</dbReference>
<dbReference type="GO" id="GO:0015026">
    <property type="term" value="F:coreceptor activity"/>
    <property type="evidence" value="ECO:0007669"/>
    <property type="project" value="TreeGrafter"/>
</dbReference>
<dbReference type="GO" id="GO:0030509">
    <property type="term" value="P:BMP signaling pathway"/>
    <property type="evidence" value="ECO:0007669"/>
    <property type="project" value="TreeGrafter"/>
</dbReference>
<dbReference type="FunFam" id="3.40.1000.10:FF:000001">
    <property type="entry name" value="Repulsive guidance molecule BMP co-receptor a"/>
    <property type="match status" value="1"/>
</dbReference>
<dbReference type="Gene3D" id="3.40.1000.10">
    <property type="entry name" value="Mog1/PsbP, alpha/beta/alpha sandwich"/>
    <property type="match status" value="1"/>
</dbReference>
<dbReference type="InterPro" id="IPR040287">
    <property type="entry name" value="RGM"/>
</dbReference>
<dbReference type="InterPro" id="IPR009496">
    <property type="entry name" value="RGM_C"/>
</dbReference>
<dbReference type="InterPro" id="IPR010536">
    <property type="entry name" value="RGM_N"/>
</dbReference>
<dbReference type="PANTHER" id="PTHR31428:SF4">
    <property type="entry name" value="REPULSIVE GUIDANCE MOLECULE A"/>
    <property type="match status" value="1"/>
</dbReference>
<dbReference type="PANTHER" id="PTHR31428">
    <property type="entry name" value="RGM DOMAIN FAMILY MEMBER DRAG-1"/>
    <property type="match status" value="1"/>
</dbReference>
<dbReference type="Pfam" id="PF06534">
    <property type="entry name" value="RGM_C"/>
    <property type="match status" value="1"/>
</dbReference>
<dbReference type="Pfam" id="PF06535">
    <property type="entry name" value="RGM_N"/>
    <property type="match status" value="1"/>
</dbReference>